<comment type="function">
    <text evidence="1">Catalyzes the reversible conversion of ribose-5-phosphate to ribulose 5-phosphate.</text>
</comment>
<comment type="catalytic activity">
    <reaction evidence="1">
        <text>aldehydo-D-ribose 5-phosphate = D-ribulose 5-phosphate</text>
        <dbReference type="Rhea" id="RHEA:14657"/>
        <dbReference type="ChEBI" id="CHEBI:58121"/>
        <dbReference type="ChEBI" id="CHEBI:58273"/>
        <dbReference type="EC" id="5.3.1.6"/>
    </reaction>
</comment>
<comment type="pathway">
    <text evidence="1">Carbohydrate degradation; pentose phosphate pathway; D-ribose 5-phosphate from D-ribulose 5-phosphate (non-oxidative stage): step 1/1.</text>
</comment>
<comment type="subunit">
    <text evidence="1">Homodimer.</text>
</comment>
<comment type="similarity">
    <text evidence="1">Belongs to the ribose 5-phosphate isomerase family.</text>
</comment>
<organism>
    <name type="scientific">Shigella dysenteriae serotype 1 (strain Sd197)</name>
    <dbReference type="NCBI Taxonomy" id="300267"/>
    <lineage>
        <taxon>Bacteria</taxon>
        <taxon>Pseudomonadati</taxon>
        <taxon>Pseudomonadota</taxon>
        <taxon>Gammaproteobacteria</taxon>
        <taxon>Enterobacterales</taxon>
        <taxon>Enterobacteriaceae</taxon>
        <taxon>Shigella</taxon>
    </lineage>
</organism>
<accession>Q32BX5</accession>
<evidence type="ECO:0000255" key="1">
    <source>
        <dbReference type="HAMAP-Rule" id="MF_00170"/>
    </source>
</evidence>
<gene>
    <name evidence="1" type="primary">rpiA</name>
    <name type="ordered locus">SDY_3168</name>
</gene>
<dbReference type="EC" id="5.3.1.6" evidence="1"/>
<dbReference type="EMBL" id="CP000034">
    <property type="protein sequence ID" value="ABB63180.1"/>
    <property type="molecule type" value="Genomic_DNA"/>
</dbReference>
<dbReference type="RefSeq" id="WP_000189743.1">
    <property type="nucleotide sequence ID" value="NC_007606.1"/>
</dbReference>
<dbReference type="RefSeq" id="YP_404671.1">
    <property type="nucleotide sequence ID" value="NC_007606.1"/>
</dbReference>
<dbReference type="SMR" id="Q32BX5"/>
<dbReference type="STRING" id="300267.SDY_3168"/>
<dbReference type="EnsemblBacteria" id="ABB63180">
    <property type="protein sequence ID" value="ABB63180"/>
    <property type="gene ID" value="SDY_3168"/>
</dbReference>
<dbReference type="GeneID" id="93779085"/>
<dbReference type="KEGG" id="sdy:SDY_3168"/>
<dbReference type="PATRIC" id="fig|300267.13.peg.3785"/>
<dbReference type="HOGENOM" id="CLU_056590_1_1_6"/>
<dbReference type="UniPathway" id="UPA00115">
    <property type="reaction ID" value="UER00412"/>
</dbReference>
<dbReference type="Proteomes" id="UP000002716">
    <property type="component" value="Chromosome"/>
</dbReference>
<dbReference type="GO" id="GO:0005829">
    <property type="term" value="C:cytosol"/>
    <property type="evidence" value="ECO:0007669"/>
    <property type="project" value="TreeGrafter"/>
</dbReference>
<dbReference type="GO" id="GO:0004751">
    <property type="term" value="F:ribose-5-phosphate isomerase activity"/>
    <property type="evidence" value="ECO:0007669"/>
    <property type="project" value="UniProtKB-UniRule"/>
</dbReference>
<dbReference type="GO" id="GO:0006014">
    <property type="term" value="P:D-ribose metabolic process"/>
    <property type="evidence" value="ECO:0007669"/>
    <property type="project" value="TreeGrafter"/>
</dbReference>
<dbReference type="GO" id="GO:0009052">
    <property type="term" value="P:pentose-phosphate shunt, non-oxidative branch"/>
    <property type="evidence" value="ECO:0007669"/>
    <property type="project" value="UniProtKB-UniRule"/>
</dbReference>
<dbReference type="CDD" id="cd01398">
    <property type="entry name" value="RPI_A"/>
    <property type="match status" value="1"/>
</dbReference>
<dbReference type="FunFam" id="3.30.70.260:FF:000004">
    <property type="entry name" value="Ribose-5-phosphate isomerase A"/>
    <property type="match status" value="1"/>
</dbReference>
<dbReference type="FunFam" id="3.40.50.1360:FF:000001">
    <property type="entry name" value="Ribose-5-phosphate isomerase A"/>
    <property type="match status" value="1"/>
</dbReference>
<dbReference type="Gene3D" id="3.30.70.260">
    <property type="match status" value="1"/>
</dbReference>
<dbReference type="Gene3D" id="3.40.50.1360">
    <property type="match status" value="1"/>
</dbReference>
<dbReference type="HAMAP" id="MF_00170">
    <property type="entry name" value="Rib_5P_isom_A"/>
    <property type="match status" value="1"/>
</dbReference>
<dbReference type="InterPro" id="IPR037171">
    <property type="entry name" value="NagB/RpiA_transferase-like"/>
</dbReference>
<dbReference type="InterPro" id="IPR020672">
    <property type="entry name" value="Ribose5P_isomerase_typA_subgr"/>
</dbReference>
<dbReference type="InterPro" id="IPR004788">
    <property type="entry name" value="Ribose5P_isomerase_type_A"/>
</dbReference>
<dbReference type="NCBIfam" id="NF001924">
    <property type="entry name" value="PRK00702.1"/>
    <property type="match status" value="1"/>
</dbReference>
<dbReference type="NCBIfam" id="TIGR00021">
    <property type="entry name" value="rpiA"/>
    <property type="match status" value="1"/>
</dbReference>
<dbReference type="PANTHER" id="PTHR11934">
    <property type="entry name" value="RIBOSE-5-PHOSPHATE ISOMERASE"/>
    <property type="match status" value="1"/>
</dbReference>
<dbReference type="PANTHER" id="PTHR11934:SF0">
    <property type="entry name" value="RIBOSE-5-PHOSPHATE ISOMERASE"/>
    <property type="match status" value="1"/>
</dbReference>
<dbReference type="Pfam" id="PF06026">
    <property type="entry name" value="Rib_5-P_isom_A"/>
    <property type="match status" value="1"/>
</dbReference>
<dbReference type="SUPFAM" id="SSF75445">
    <property type="entry name" value="D-ribose-5-phosphate isomerase (RpiA), lid domain"/>
    <property type="match status" value="1"/>
</dbReference>
<dbReference type="SUPFAM" id="SSF100950">
    <property type="entry name" value="NagB/RpiA/CoA transferase-like"/>
    <property type="match status" value="1"/>
</dbReference>
<keyword id="KW-0413">Isomerase</keyword>
<keyword id="KW-1185">Reference proteome</keyword>
<protein>
    <recommendedName>
        <fullName evidence="1">Ribose-5-phosphate isomerase A</fullName>
        <ecNumber evidence="1">5.3.1.6</ecNumber>
    </recommendedName>
    <alternativeName>
        <fullName evidence="1">Phosphoriboisomerase A</fullName>
        <shortName evidence="1">PRI</shortName>
    </alternativeName>
</protein>
<name>RPIA_SHIDS</name>
<sequence length="219" mass="22860">MTQDELKKAVGWAALQYVQPGTIVGVGTGSTAAHFIDALGTMKGQIEGAVSSSDASTEKLKSLGIHVFDLNEVDSLGIYVDGADEINGHMQMIKGGGAALTREKIIASVAEKFICIADASKQVDILGKFPLPVEVIPMARSAVARQLVKLGGRPEYRQGVVTDNGNVILDVHGMEILDPIAMENAINAIPGVVTVGLFANRGADVALIGTPDGVKTIVK</sequence>
<reference key="1">
    <citation type="journal article" date="2005" name="Nucleic Acids Res.">
        <title>Genome dynamics and diversity of Shigella species, the etiologic agents of bacillary dysentery.</title>
        <authorList>
            <person name="Yang F."/>
            <person name="Yang J."/>
            <person name="Zhang X."/>
            <person name="Chen L."/>
            <person name="Jiang Y."/>
            <person name="Yan Y."/>
            <person name="Tang X."/>
            <person name="Wang J."/>
            <person name="Xiong Z."/>
            <person name="Dong J."/>
            <person name="Xue Y."/>
            <person name="Zhu Y."/>
            <person name="Xu X."/>
            <person name="Sun L."/>
            <person name="Chen S."/>
            <person name="Nie H."/>
            <person name="Peng J."/>
            <person name="Xu J."/>
            <person name="Wang Y."/>
            <person name="Yuan Z."/>
            <person name="Wen Y."/>
            <person name="Yao Z."/>
            <person name="Shen Y."/>
            <person name="Qiang B."/>
            <person name="Hou Y."/>
            <person name="Yu J."/>
            <person name="Jin Q."/>
        </authorList>
    </citation>
    <scope>NUCLEOTIDE SEQUENCE [LARGE SCALE GENOMIC DNA]</scope>
    <source>
        <strain>Sd197</strain>
    </source>
</reference>
<proteinExistence type="inferred from homology"/>
<feature type="chain" id="PRO_1000016998" description="Ribose-5-phosphate isomerase A">
    <location>
        <begin position="1"/>
        <end position="219"/>
    </location>
</feature>
<feature type="active site" description="Proton acceptor" evidence="1">
    <location>
        <position position="103"/>
    </location>
</feature>
<feature type="binding site" evidence="1">
    <location>
        <begin position="28"/>
        <end position="31"/>
    </location>
    <ligand>
        <name>substrate</name>
    </ligand>
</feature>
<feature type="binding site" evidence="1">
    <location>
        <begin position="81"/>
        <end position="84"/>
    </location>
    <ligand>
        <name>substrate</name>
    </ligand>
</feature>
<feature type="binding site" evidence="1">
    <location>
        <begin position="94"/>
        <end position="97"/>
    </location>
    <ligand>
        <name>substrate</name>
    </ligand>
</feature>
<feature type="binding site" evidence="1">
    <location>
        <position position="121"/>
    </location>
    <ligand>
        <name>substrate</name>
    </ligand>
</feature>